<comment type="catalytic activity">
    <reaction>
        <text>[thioredoxin]-dithiol + NADP(+) = [thioredoxin]-disulfide + NADPH + H(+)</text>
        <dbReference type="Rhea" id="RHEA:20345"/>
        <dbReference type="Rhea" id="RHEA-COMP:10698"/>
        <dbReference type="Rhea" id="RHEA-COMP:10700"/>
        <dbReference type="ChEBI" id="CHEBI:15378"/>
        <dbReference type="ChEBI" id="CHEBI:29950"/>
        <dbReference type="ChEBI" id="CHEBI:50058"/>
        <dbReference type="ChEBI" id="CHEBI:57783"/>
        <dbReference type="ChEBI" id="CHEBI:58349"/>
        <dbReference type="EC" id="1.8.1.9"/>
    </reaction>
</comment>
<comment type="cofactor">
    <cofactor evidence="2">
        <name>FAD</name>
        <dbReference type="ChEBI" id="CHEBI:57692"/>
    </cofactor>
    <text evidence="2">Binds 1 FAD per subunit.</text>
</comment>
<comment type="subunit">
    <text evidence="2">Homodimer.</text>
</comment>
<comment type="subcellular location">
    <subcellularLocation>
        <location evidence="1">Cytoplasm</location>
    </subcellularLocation>
</comment>
<comment type="miscellaneous">
    <text>The active site is a redox-active disulfide bond.</text>
</comment>
<comment type="similarity">
    <text evidence="3">Belongs to the class-II pyridine nucleotide-disulfide oxidoreductase family.</text>
</comment>
<dbReference type="EC" id="1.8.1.9"/>
<dbReference type="EMBL" id="AE000520">
    <property type="protein sequence ID" value="AAC65780.1"/>
    <property type="molecule type" value="Genomic_DNA"/>
</dbReference>
<dbReference type="PIR" id="C71278">
    <property type="entry name" value="C71278"/>
</dbReference>
<dbReference type="RefSeq" id="WP_010882258.1">
    <property type="nucleotide sequence ID" value="NC_021490.2"/>
</dbReference>
<dbReference type="SMR" id="O83790"/>
<dbReference type="IntAct" id="O83790">
    <property type="interactions" value="9"/>
</dbReference>
<dbReference type="STRING" id="243276.TP_0814"/>
<dbReference type="EnsemblBacteria" id="AAC65780">
    <property type="protein sequence ID" value="AAC65780"/>
    <property type="gene ID" value="TP_0814"/>
</dbReference>
<dbReference type="GeneID" id="93876573"/>
<dbReference type="KEGG" id="tpa:TP_0814"/>
<dbReference type="KEGG" id="tpw:TPANIC_0814"/>
<dbReference type="eggNOG" id="COG0492">
    <property type="taxonomic scope" value="Bacteria"/>
</dbReference>
<dbReference type="HOGENOM" id="CLU_031864_5_3_12"/>
<dbReference type="OrthoDB" id="9806179at2"/>
<dbReference type="Proteomes" id="UP000000811">
    <property type="component" value="Chromosome"/>
</dbReference>
<dbReference type="GO" id="GO:0005737">
    <property type="term" value="C:cytoplasm"/>
    <property type="evidence" value="ECO:0007669"/>
    <property type="project" value="UniProtKB-SubCell"/>
</dbReference>
<dbReference type="GO" id="GO:0004791">
    <property type="term" value="F:thioredoxin-disulfide reductase (NADPH) activity"/>
    <property type="evidence" value="ECO:0007669"/>
    <property type="project" value="UniProtKB-EC"/>
</dbReference>
<dbReference type="GO" id="GO:0019430">
    <property type="term" value="P:removal of superoxide radicals"/>
    <property type="evidence" value="ECO:0007669"/>
    <property type="project" value="InterPro"/>
</dbReference>
<dbReference type="Gene3D" id="3.50.50.60">
    <property type="entry name" value="FAD/NAD(P)-binding domain"/>
    <property type="match status" value="2"/>
</dbReference>
<dbReference type="InterPro" id="IPR036188">
    <property type="entry name" value="FAD/NAD-bd_sf"/>
</dbReference>
<dbReference type="InterPro" id="IPR023753">
    <property type="entry name" value="FAD/NAD-binding_dom"/>
</dbReference>
<dbReference type="InterPro" id="IPR050097">
    <property type="entry name" value="Ferredoxin-NADP_redctase_2"/>
</dbReference>
<dbReference type="InterPro" id="IPR008255">
    <property type="entry name" value="Pyr_nucl-diS_OxRdtase_2_AS"/>
</dbReference>
<dbReference type="InterPro" id="IPR005982">
    <property type="entry name" value="Thioredox_Rdtase"/>
</dbReference>
<dbReference type="NCBIfam" id="TIGR01292">
    <property type="entry name" value="TRX_reduct"/>
    <property type="match status" value="1"/>
</dbReference>
<dbReference type="PANTHER" id="PTHR48105">
    <property type="entry name" value="THIOREDOXIN REDUCTASE 1-RELATED-RELATED"/>
    <property type="match status" value="1"/>
</dbReference>
<dbReference type="Pfam" id="PF07992">
    <property type="entry name" value="Pyr_redox_2"/>
    <property type="match status" value="1"/>
</dbReference>
<dbReference type="PRINTS" id="PR00368">
    <property type="entry name" value="FADPNR"/>
</dbReference>
<dbReference type="PRINTS" id="PR00469">
    <property type="entry name" value="PNDRDTASEII"/>
</dbReference>
<dbReference type="SUPFAM" id="SSF51905">
    <property type="entry name" value="FAD/NAD(P)-binding domain"/>
    <property type="match status" value="1"/>
</dbReference>
<dbReference type="PROSITE" id="PS00573">
    <property type="entry name" value="PYRIDINE_REDOX_2"/>
    <property type="match status" value="1"/>
</dbReference>
<organism>
    <name type="scientific">Treponema pallidum (strain Nichols)</name>
    <dbReference type="NCBI Taxonomy" id="243276"/>
    <lineage>
        <taxon>Bacteria</taxon>
        <taxon>Pseudomonadati</taxon>
        <taxon>Spirochaetota</taxon>
        <taxon>Spirochaetia</taxon>
        <taxon>Spirochaetales</taxon>
        <taxon>Treponemataceae</taxon>
        <taxon>Treponema</taxon>
    </lineage>
</organism>
<protein>
    <recommendedName>
        <fullName>Thioredoxin reductase</fullName>
        <shortName>TRXR</shortName>
        <ecNumber>1.8.1.9</ecNumber>
    </recommendedName>
</protein>
<accession>O83790</accession>
<name>TRXB_TREPA</name>
<reference key="1">
    <citation type="journal article" date="1998" name="Science">
        <title>Complete genome sequence of Treponema pallidum, the syphilis spirochete.</title>
        <authorList>
            <person name="Fraser C.M."/>
            <person name="Norris S.J."/>
            <person name="Weinstock G.M."/>
            <person name="White O."/>
            <person name="Sutton G.G."/>
            <person name="Dodson R.J."/>
            <person name="Gwinn M.L."/>
            <person name="Hickey E.K."/>
            <person name="Clayton R.A."/>
            <person name="Ketchum K.A."/>
            <person name="Sodergren E."/>
            <person name="Hardham J.M."/>
            <person name="McLeod M.P."/>
            <person name="Salzberg S.L."/>
            <person name="Peterson J.D."/>
            <person name="Khalak H.G."/>
            <person name="Richardson D.L."/>
            <person name="Howell J.K."/>
            <person name="Chidambaram M."/>
            <person name="Utterback T.R."/>
            <person name="McDonald L.A."/>
            <person name="Artiach P."/>
            <person name="Bowman C."/>
            <person name="Cotton M.D."/>
            <person name="Fujii C."/>
            <person name="Garland S.A."/>
            <person name="Hatch B."/>
            <person name="Horst K."/>
            <person name="Roberts K.M."/>
            <person name="Sandusky M."/>
            <person name="Weidman J.F."/>
            <person name="Smith H.O."/>
            <person name="Venter J.C."/>
        </authorList>
    </citation>
    <scope>NUCLEOTIDE SEQUENCE [LARGE SCALE GENOMIC DNA]</scope>
    <source>
        <strain>Nichols</strain>
    </source>
</reference>
<keyword id="KW-0963">Cytoplasm</keyword>
<keyword id="KW-1015">Disulfide bond</keyword>
<keyword id="KW-0274">FAD</keyword>
<keyword id="KW-0285">Flavoprotein</keyword>
<keyword id="KW-0521">NADP</keyword>
<keyword id="KW-0560">Oxidoreductase</keyword>
<keyword id="KW-0676">Redox-active center</keyword>
<keyword id="KW-1185">Reference proteome</keyword>
<gene>
    <name type="primary">trxB</name>
    <name type="ordered locus">TP_0814</name>
</gene>
<feature type="chain" id="PRO_0000166754" description="Thioredoxin reductase">
    <location>
        <begin position="1"/>
        <end position="307"/>
    </location>
</feature>
<feature type="binding site" evidence="2">
    <location>
        <begin position="34"/>
        <end position="41"/>
    </location>
    <ligand>
        <name>FAD</name>
        <dbReference type="ChEBI" id="CHEBI:57692"/>
    </ligand>
</feature>
<feature type="binding site" evidence="2">
    <location>
        <begin position="275"/>
        <end position="284"/>
    </location>
    <ligand>
        <name>FAD</name>
        <dbReference type="ChEBI" id="CHEBI:57692"/>
    </ligand>
</feature>
<feature type="disulfide bond" description="Redox-active" evidence="2">
    <location>
        <begin position="134"/>
        <end position="137"/>
    </location>
</feature>
<proteinExistence type="inferred from homology"/>
<sequence length="307" mass="32868">METDYDVIIVGAGAAGLSAAQYACRANLRTLVIESKAHGGQALLIDSLENYPGYATPISGFEYAENMKKQAVAFGAQIAYEEVTTIGKRDSVFHITTGTGAYTAMSVILATGAEHRKMGIPGESEFLGRGVSYCATCDGPFFRNKHVVVIGGGDAACDESLVLSRLTDRVTMIHRRDTLRAQKAIAERTLKNPHIAVQWNTTLEAVRGETKVSSVLLKDVKTGETRELACDAVFFFIGMVPITGLLPDAEKDSTGYIVTDDEMRTSVEGIFAAGDVRAKSFRQVITATSDGALAAHAAASYIDTLQN</sequence>
<evidence type="ECO:0000250" key="1"/>
<evidence type="ECO:0000250" key="2">
    <source>
        <dbReference type="UniProtKB" id="P0A9P4"/>
    </source>
</evidence>
<evidence type="ECO:0000305" key="3"/>